<proteinExistence type="inferred from homology"/>
<sequence length="402" mass="43632">MTVELLKAIVESETSVPPSAQRIVYNNQLLGDDARTLEQVGIGEGDMLGVHVTLRSPQAPTRTAGGPSAPAAQQNLQRRQAMNPDPETIRLHILGDPRVREAVRRQNPELADAASDAQRFRDVFLNQQRREAQLEAEKEARIAMLNADPFNPENQRQIEEIIRQNAVTENLHNAMEHHPESFGRVTMLYIPVEVNGHKLNAFVDSGAQVTIMSPECATACNIMRLVDQRYGGIAKGVGTANILGRVHSAQIKIGSMFLPCSFTVMEGKHIDLLLGLDMLRRHQACIDLRRGALVIQDQAVPFLGEADIPKHLQDGFEDEPLVKGADGAEVGARTGAVTHQAQGPGGASSSTAPPSRPAPAQSSRWPQDSIAKITELGFTREEAMRALDAANGDLDGAIGFLI</sequence>
<reference key="1">
    <citation type="journal article" date="2005" name="Nature">
        <title>Genome sequencing and analysis of Aspergillus oryzae.</title>
        <authorList>
            <person name="Machida M."/>
            <person name="Asai K."/>
            <person name="Sano M."/>
            <person name="Tanaka T."/>
            <person name="Kumagai T."/>
            <person name="Terai G."/>
            <person name="Kusumoto K."/>
            <person name="Arima T."/>
            <person name="Akita O."/>
            <person name="Kashiwagi Y."/>
            <person name="Abe K."/>
            <person name="Gomi K."/>
            <person name="Horiuchi H."/>
            <person name="Kitamoto K."/>
            <person name="Kobayashi T."/>
            <person name="Takeuchi M."/>
            <person name="Denning D.W."/>
            <person name="Galagan J.E."/>
            <person name="Nierman W.C."/>
            <person name="Yu J."/>
            <person name="Archer D.B."/>
            <person name="Bennett J.W."/>
            <person name="Bhatnagar D."/>
            <person name="Cleveland T.E."/>
            <person name="Fedorova N.D."/>
            <person name="Gotoh O."/>
            <person name="Horikawa H."/>
            <person name="Hosoyama A."/>
            <person name="Ichinomiya M."/>
            <person name="Igarashi R."/>
            <person name="Iwashita K."/>
            <person name="Juvvadi P.R."/>
            <person name="Kato M."/>
            <person name="Kato Y."/>
            <person name="Kin T."/>
            <person name="Kokubun A."/>
            <person name="Maeda H."/>
            <person name="Maeyama N."/>
            <person name="Maruyama J."/>
            <person name="Nagasaki H."/>
            <person name="Nakajima T."/>
            <person name="Oda K."/>
            <person name="Okada K."/>
            <person name="Paulsen I."/>
            <person name="Sakamoto K."/>
            <person name="Sawano T."/>
            <person name="Takahashi M."/>
            <person name="Takase K."/>
            <person name="Terabayashi Y."/>
            <person name="Wortman J.R."/>
            <person name="Yamada O."/>
            <person name="Yamagata Y."/>
            <person name="Anazawa H."/>
            <person name="Hata Y."/>
            <person name="Koide Y."/>
            <person name="Komori T."/>
            <person name="Koyama Y."/>
            <person name="Minetoki T."/>
            <person name="Suharnan S."/>
            <person name="Tanaka A."/>
            <person name="Isono K."/>
            <person name="Kuhara S."/>
            <person name="Ogasawara N."/>
            <person name="Kikuchi H."/>
        </authorList>
    </citation>
    <scope>NUCLEOTIDE SEQUENCE [LARGE SCALE GENOMIC DNA]</scope>
    <source>
        <strain>ATCC 42149 / RIB 40</strain>
    </source>
</reference>
<gene>
    <name type="primary">ddi1</name>
    <name type="ORF">AO090005000469</name>
</gene>
<organism>
    <name type="scientific">Aspergillus oryzae (strain ATCC 42149 / RIB 40)</name>
    <name type="common">Yellow koji mold</name>
    <dbReference type="NCBI Taxonomy" id="510516"/>
    <lineage>
        <taxon>Eukaryota</taxon>
        <taxon>Fungi</taxon>
        <taxon>Dikarya</taxon>
        <taxon>Ascomycota</taxon>
        <taxon>Pezizomycotina</taxon>
        <taxon>Eurotiomycetes</taxon>
        <taxon>Eurotiomycetidae</taxon>
        <taxon>Eurotiales</taxon>
        <taxon>Aspergillaceae</taxon>
        <taxon>Aspergillus</taxon>
        <taxon>Aspergillus subgen. Circumdati</taxon>
    </lineage>
</organism>
<protein>
    <recommendedName>
        <fullName>DNA damage-inducible protein 1</fullName>
        <ecNumber evidence="2">3.4.23.-</ecNumber>
    </recommendedName>
</protein>
<evidence type="ECO:0000250" key="1"/>
<evidence type="ECO:0000250" key="2">
    <source>
        <dbReference type="UniProtKB" id="I7HUG0"/>
    </source>
</evidence>
<evidence type="ECO:0000250" key="3">
    <source>
        <dbReference type="UniProtKB" id="P40087"/>
    </source>
</evidence>
<evidence type="ECO:0000255" key="4">
    <source>
        <dbReference type="PROSITE-ProRule" id="PRU00212"/>
    </source>
</evidence>
<evidence type="ECO:0000255" key="5">
    <source>
        <dbReference type="PROSITE-ProRule" id="PRU00214"/>
    </source>
</evidence>
<evidence type="ECO:0000256" key="6">
    <source>
        <dbReference type="SAM" id="MobiDB-lite"/>
    </source>
</evidence>
<evidence type="ECO:0000305" key="7"/>
<comment type="function">
    <text evidence="2 3">Probable aspartic protease. May be involved in the regulation of exocytosis. Acts as a linker between the 19S proteasome and polyubiquitinated proteins via UBA domain interactions with ubiquitin for their subsequent degradation. Required for S-phase checkpoint control.</text>
</comment>
<comment type="subunit">
    <text evidence="1">Binds ubiquitin and polyubiquitinated proteins.</text>
</comment>
<comment type="subcellular location">
    <subcellularLocation>
        <location evidence="1">Cytoplasm</location>
    </subcellularLocation>
</comment>
<comment type="similarity">
    <text evidence="7">Belongs to the DDI1 family.</text>
</comment>
<comment type="sequence caution" evidence="7">
    <conflict type="erroneous initiation">
        <sequence resource="EMBL-CDS" id="BAE55528"/>
    </conflict>
</comment>
<name>DDI1_ASPOR</name>
<accession>Q2USD7</accession>
<dbReference type="EC" id="3.4.23.-" evidence="2"/>
<dbReference type="EMBL" id="BA000049">
    <property type="protein sequence ID" value="BAE55528.1"/>
    <property type="status" value="ALT_INIT"/>
    <property type="molecule type" value="Genomic_DNA"/>
</dbReference>
<dbReference type="SMR" id="Q2USD7"/>
<dbReference type="STRING" id="510516.Q2USD7"/>
<dbReference type="EnsemblFungi" id="BAE55528">
    <property type="protein sequence ID" value="BAE55528"/>
    <property type="gene ID" value="AO090005000469"/>
</dbReference>
<dbReference type="Proteomes" id="UP000006564">
    <property type="component" value="Chromosome 1"/>
</dbReference>
<dbReference type="GO" id="GO:0005737">
    <property type="term" value="C:cytoplasm"/>
    <property type="evidence" value="ECO:0007669"/>
    <property type="project" value="UniProtKB-SubCell"/>
</dbReference>
<dbReference type="GO" id="GO:0004190">
    <property type="term" value="F:aspartic-type endopeptidase activity"/>
    <property type="evidence" value="ECO:0007669"/>
    <property type="project" value="UniProtKB-KW"/>
</dbReference>
<dbReference type="GO" id="GO:0015031">
    <property type="term" value="P:protein transport"/>
    <property type="evidence" value="ECO:0007669"/>
    <property type="project" value="UniProtKB-KW"/>
</dbReference>
<dbReference type="GO" id="GO:0006508">
    <property type="term" value="P:proteolysis"/>
    <property type="evidence" value="ECO:0007669"/>
    <property type="project" value="UniProtKB-KW"/>
</dbReference>
<dbReference type="CDD" id="cd05479">
    <property type="entry name" value="RP_DDI"/>
    <property type="match status" value="1"/>
</dbReference>
<dbReference type="CDD" id="cd01796">
    <property type="entry name" value="Ubl_Ddi1_like"/>
    <property type="match status" value="1"/>
</dbReference>
<dbReference type="Gene3D" id="2.40.70.10">
    <property type="entry name" value="Acid Proteases"/>
    <property type="match status" value="1"/>
</dbReference>
<dbReference type="Gene3D" id="1.10.8.10">
    <property type="entry name" value="DNA helicase RuvA subunit, C-terminal domain"/>
    <property type="match status" value="1"/>
</dbReference>
<dbReference type="Gene3D" id="3.10.20.90">
    <property type="entry name" value="Phosphatidylinositol 3-kinase Catalytic Subunit, Chain A, domain 1"/>
    <property type="match status" value="1"/>
</dbReference>
<dbReference type="InterPro" id="IPR033882">
    <property type="entry name" value="DDI1_N"/>
</dbReference>
<dbReference type="InterPro" id="IPR019103">
    <property type="entry name" value="Peptidase_aspartic_DDI1-type"/>
</dbReference>
<dbReference type="InterPro" id="IPR021109">
    <property type="entry name" value="Peptidase_aspartic_dom_sf"/>
</dbReference>
<dbReference type="InterPro" id="IPR015940">
    <property type="entry name" value="UBA"/>
</dbReference>
<dbReference type="InterPro" id="IPR009060">
    <property type="entry name" value="UBA-like_sf"/>
</dbReference>
<dbReference type="InterPro" id="IPR000626">
    <property type="entry name" value="Ubiquitin-like_dom"/>
</dbReference>
<dbReference type="InterPro" id="IPR029071">
    <property type="entry name" value="Ubiquitin-like_domsf"/>
</dbReference>
<dbReference type="PANTHER" id="PTHR12917">
    <property type="entry name" value="ASPARTYL PROTEASE DDI-RELATED"/>
    <property type="match status" value="1"/>
</dbReference>
<dbReference type="PANTHER" id="PTHR12917:SF1">
    <property type="entry name" value="AT13091P"/>
    <property type="match status" value="1"/>
</dbReference>
<dbReference type="Pfam" id="PF09668">
    <property type="entry name" value="Asp_protease"/>
    <property type="match status" value="1"/>
</dbReference>
<dbReference type="Pfam" id="PF24669">
    <property type="entry name" value="Ddi2_HDD"/>
    <property type="match status" value="1"/>
</dbReference>
<dbReference type="Pfam" id="PF00627">
    <property type="entry name" value="UBA"/>
    <property type="match status" value="1"/>
</dbReference>
<dbReference type="Pfam" id="PF00240">
    <property type="entry name" value="ubiquitin"/>
    <property type="match status" value="1"/>
</dbReference>
<dbReference type="SMART" id="SM00165">
    <property type="entry name" value="UBA"/>
    <property type="match status" value="1"/>
</dbReference>
<dbReference type="SUPFAM" id="SSF50630">
    <property type="entry name" value="Acid proteases"/>
    <property type="match status" value="1"/>
</dbReference>
<dbReference type="SUPFAM" id="SSF46934">
    <property type="entry name" value="UBA-like"/>
    <property type="match status" value="1"/>
</dbReference>
<dbReference type="SUPFAM" id="SSF54236">
    <property type="entry name" value="Ubiquitin-like"/>
    <property type="match status" value="1"/>
</dbReference>
<dbReference type="PROSITE" id="PS50030">
    <property type="entry name" value="UBA"/>
    <property type="match status" value="1"/>
</dbReference>
<dbReference type="PROSITE" id="PS50053">
    <property type="entry name" value="UBIQUITIN_2"/>
    <property type="match status" value="1"/>
</dbReference>
<keyword id="KW-0064">Aspartyl protease</keyword>
<keyword id="KW-0963">Cytoplasm</keyword>
<keyword id="KW-0378">Hydrolase</keyword>
<keyword id="KW-0645">Protease</keyword>
<keyword id="KW-0653">Protein transport</keyword>
<keyword id="KW-1185">Reference proteome</keyword>
<keyword id="KW-0813">Transport</keyword>
<feature type="chain" id="PRO_0000285307" description="DNA damage-inducible protein 1">
    <location>
        <begin position="1"/>
        <end position="402"/>
    </location>
</feature>
<feature type="domain" description="Ubiquitin-like" evidence="5">
    <location>
        <begin position="1"/>
        <end position="57"/>
    </location>
</feature>
<feature type="domain" description="UBA" evidence="4">
    <location>
        <begin position="364"/>
        <end position="402"/>
    </location>
</feature>
<feature type="region of interest" description="Disordered" evidence="6">
    <location>
        <begin position="338"/>
        <end position="369"/>
    </location>
</feature>
<feature type="compositionally biased region" description="Low complexity" evidence="6">
    <location>
        <begin position="347"/>
        <end position="363"/>
    </location>
</feature>
<feature type="active site" evidence="7">
    <location>
        <position position="204"/>
    </location>
</feature>